<dbReference type="EC" id="2.1.2.11" evidence="1"/>
<dbReference type="EMBL" id="CP000712">
    <property type="protein sequence ID" value="ABQ80684.1"/>
    <property type="molecule type" value="Genomic_DNA"/>
</dbReference>
<dbReference type="SMR" id="A5W974"/>
<dbReference type="KEGG" id="ppf:Pput_4564"/>
<dbReference type="eggNOG" id="COG0413">
    <property type="taxonomic scope" value="Bacteria"/>
</dbReference>
<dbReference type="HOGENOM" id="CLU_036645_1_0_6"/>
<dbReference type="UniPathway" id="UPA00028">
    <property type="reaction ID" value="UER00003"/>
</dbReference>
<dbReference type="GO" id="GO:0005737">
    <property type="term" value="C:cytoplasm"/>
    <property type="evidence" value="ECO:0007669"/>
    <property type="project" value="UniProtKB-SubCell"/>
</dbReference>
<dbReference type="GO" id="GO:0003864">
    <property type="term" value="F:3-methyl-2-oxobutanoate hydroxymethyltransferase activity"/>
    <property type="evidence" value="ECO:0007669"/>
    <property type="project" value="UniProtKB-UniRule"/>
</dbReference>
<dbReference type="GO" id="GO:0000287">
    <property type="term" value="F:magnesium ion binding"/>
    <property type="evidence" value="ECO:0007669"/>
    <property type="project" value="TreeGrafter"/>
</dbReference>
<dbReference type="GO" id="GO:0015940">
    <property type="term" value="P:pantothenate biosynthetic process"/>
    <property type="evidence" value="ECO:0007669"/>
    <property type="project" value="UniProtKB-UniRule"/>
</dbReference>
<dbReference type="CDD" id="cd06557">
    <property type="entry name" value="KPHMT-like"/>
    <property type="match status" value="1"/>
</dbReference>
<dbReference type="FunFam" id="3.20.20.60:FF:000003">
    <property type="entry name" value="3-methyl-2-oxobutanoate hydroxymethyltransferase"/>
    <property type="match status" value="1"/>
</dbReference>
<dbReference type="Gene3D" id="3.20.20.60">
    <property type="entry name" value="Phosphoenolpyruvate-binding domains"/>
    <property type="match status" value="1"/>
</dbReference>
<dbReference type="HAMAP" id="MF_00156">
    <property type="entry name" value="PanB"/>
    <property type="match status" value="1"/>
</dbReference>
<dbReference type="InterPro" id="IPR003700">
    <property type="entry name" value="Pantoate_hydroxy_MeTrfase"/>
</dbReference>
<dbReference type="InterPro" id="IPR015813">
    <property type="entry name" value="Pyrv/PenolPyrv_kinase-like_dom"/>
</dbReference>
<dbReference type="InterPro" id="IPR040442">
    <property type="entry name" value="Pyrv_kinase-like_dom_sf"/>
</dbReference>
<dbReference type="NCBIfam" id="TIGR00222">
    <property type="entry name" value="panB"/>
    <property type="match status" value="1"/>
</dbReference>
<dbReference type="NCBIfam" id="NF001452">
    <property type="entry name" value="PRK00311.1"/>
    <property type="match status" value="1"/>
</dbReference>
<dbReference type="PANTHER" id="PTHR20881">
    <property type="entry name" value="3-METHYL-2-OXOBUTANOATE HYDROXYMETHYLTRANSFERASE"/>
    <property type="match status" value="1"/>
</dbReference>
<dbReference type="PANTHER" id="PTHR20881:SF0">
    <property type="entry name" value="3-METHYL-2-OXOBUTANOATE HYDROXYMETHYLTRANSFERASE"/>
    <property type="match status" value="1"/>
</dbReference>
<dbReference type="Pfam" id="PF02548">
    <property type="entry name" value="Pantoate_transf"/>
    <property type="match status" value="1"/>
</dbReference>
<dbReference type="PIRSF" id="PIRSF000388">
    <property type="entry name" value="Pantoate_hydroxy_MeTrfase"/>
    <property type="match status" value="1"/>
</dbReference>
<dbReference type="SUPFAM" id="SSF51621">
    <property type="entry name" value="Phosphoenolpyruvate/pyruvate domain"/>
    <property type="match status" value="1"/>
</dbReference>
<accession>A5W974</accession>
<keyword id="KW-0963">Cytoplasm</keyword>
<keyword id="KW-0460">Magnesium</keyword>
<keyword id="KW-0479">Metal-binding</keyword>
<keyword id="KW-0566">Pantothenate biosynthesis</keyword>
<keyword id="KW-0808">Transferase</keyword>
<organism>
    <name type="scientific">Pseudomonas putida (strain ATCC 700007 / DSM 6899 / JCM 31910 / BCRC 17059 / LMG 24140 / F1)</name>
    <dbReference type="NCBI Taxonomy" id="351746"/>
    <lineage>
        <taxon>Bacteria</taxon>
        <taxon>Pseudomonadati</taxon>
        <taxon>Pseudomonadota</taxon>
        <taxon>Gammaproteobacteria</taxon>
        <taxon>Pseudomonadales</taxon>
        <taxon>Pseudomonadaceae</taxon>
        <taxon>Pseudomonas</taxon>
    </lineage>
</organism>
<comment type="function">
    <text evidence="1">Catalyzes the reversible reaction in which hydroxymethyl group from 5,10-methylenetetrahydrofolate is transferred onto alpha-ketoisovalerate to form ketopantoate.</text>
</comment>
<comment type="catalytic activity">
    <reaction evidence="1">
        <text>3-methyl-2-oxobutanoate + (6R)-5,10-methylene-5,6,7,8-tetrahydrofolate + H2O = 2-dehydropantoate + (6S)-5,6,7,8-tetrahydrofolate</text>
        <dbReference type="Rhea" id="RHEA:11824"/>
        <dbReference type="ChEBI" id="CHEBI:11561"/>
        <dbReference type="ChEBI" id="CHEBI:11851"/>
        <dbReference type="ChEBI" id="CHEBI:15377"/>
        <dbReference type="ChEBI" id="CHEBI:15636"/>
        <dbReference type="ChEBI" id="CHEBI:57453"/>
        <dbReference type="EC" id="2.1.2.11"/>
    </reaction>
</comment>
<comment type="cofactor">
    <cofactor evidence="1">
        <name>Mg(2+)</name>
        <dbReference type="ChEBI" id="CHEBI:18420"/>
    </cofactor>
    <text evidence="1">Binds 1 Mg(2+) ion per subunit.</text>
</comment>
<comment type="pathway">
    <text evidence="1">Cofactor biosynthesis; (R)-pantothenate biosynthesis; (R)-pantoate from 3-methyl-2-oxobutanoate: step 1/2.</text>
</comment>
<comment type="subunit">
    <text evidence="1">Homodecamer; pentamer of dimers.</text>
</comment>
<comment type="subcellular location">
    <subcellularLocation>
        <location evidence="1">Cytoplasm</location>
    </subcellularLocation>
</comment>
<comment type="similarity">
    <text evidence="1">Belongs to the PanB family.</text>
</comment>
<reference key="1">
    <citation type="submission" date="2007-05" db="EMBL/GenBank/DDBJ databases">
        <title>Complete sequence of Pseudomonas putida F1.</title>
        <authorList>
            <consortium name="US DOE Joint Genome Institute"/>
            <person name="Copeland A."/>
            <person name="Lucas S."/>
            <person name="Lapidus A."/>
            <person name="Barry K."/>
            <person name="Detter J.C."/>
            <person name="Glavina del Rio T."/>
            <person name="Hammon N."/>
            <person name="Israni S."/>
            <person name="Dalin E."/>
            <person name="Tice H."/>
            <person name="Pitluck S."/>
            <person name="Chain P."/>
            <person name="Malfatti S."/>
            <person name="Shin M."/>
            <person name="Vergez L."/>
            <person name="Schmutz J."/>
            <person name="Larimer F."/>
            <person name="Land M."/>
            <person name="Hauser L."/>
            <person name="Kyrpides N."/>
            <person name="Lykidis A."/>
            <person name="Parales R."/>
            <person name="Richardson P."/>
        </authorList>
    </citation>
    <scope>NUCLEOTIDE SEQUENCE [LARGE SCALE GENOMIC DNA]</scope>
    <source>
        <strain>ATCC 700007 / DSM 6899 / JCM 31910 / BCRC 17059 / LMG 24140 / F1</strain>
    </source>
</reference>
<name>PANB_PSEP1</name>
<evidence type="ECO:0000255" key="1">
    <source>
        <dbReference type="HAMAP-Rule" id="MF_00156"/>
    </source>
</evidence>
<gene>
    <name evidence="1" type="primary">panB</name>
    <name type="ordered locus">Pput_4564</name>
</gene>
<protein>
    <recommendedName>
        <fullName evidence="1">3-methyl-2-oxobutanoate hydroxymethyltransferase</fullName>
        <ecNumber evidence="1">2.1.2.11</ecNumber>
    </recommendedName>
    <alternativeName>
        <fullName evidence="1">Ketopantoate hydroxymethyltransferase</fullName>
        <shortName evidence="1">KPHMT</shortName>
    </alternativeName>
</protein>
<sequence>MPEVTLTTLNGLKAKGEKITMLTCYDATFAKAASQAGVEVLLVGDSLGMVLQGHDSTLPVTTAEMAYHTASVKRGNDGALILTDLPFMAHATPEQAFANSATLMQAGAHMVKIEGAAWLAETIRLLAERGVPVCAHMGLTPQTVNVLGGYKVQGRQEAQARQMRADAIALEQAGAAMLLLECVPSELAAEITNAVGIPVIGIGAGSATDGQVLVLHDMLGLSLSGRVPKFVKNFMQGQPDIHSALVAYVEAVKQVSFPGSEHGFSA</sequence>
<feature type="chain" id="PRO_1000011377" description="3-methyl-2-oxobutanoate hydroxymethyltransferase">
    <location>
        <begin position="1"/>
        <end position="266"/>
    </location>
</feature>
<feature type="active site" description="Proton acceptor" evidence="1">
    <location>
        <position position="181"/>
    </location>
</feature>
<feature type="binding site" evidence="1">
    <location>
        <begin position="45"/>
        <end position="46"/>
    </location>
    <ligand>
        <name>3-methyl-2-oxobutanoate</name>
        <dbReference type="ChEBI" id="CHEBI:11851"/>
    </ligand>
</feature>
<feature type="binding site" evidence="1">
    <location>
        <position position="45"/>
    </location>
    <ligand>
        <name>Mg(2+)</name>
        <dbReference type="ChEBI" id="CHEBI:18420"/>
    </ligand>
</feature>
<feature type="binding site" evidence="1">
    <location>
        <position position="84"/>
    </location>
    <ligand>
        <name>3-methyl-2-oxobutanoate</name>
        <dbReference type="ChEBI" id="CHEBI:11851"/>
    </ligand>
</feature>
<feature type="binding site" evidence="1">
    <location>
        <position position="84"/>
    </location>
    <ligand>
        <name>Mg(2+)</name>
        <dbReference type="ChEBI" id="CHEBI:18420"/>
    </ligand>
</feature>
<feature type="binding site" evidence="1">
    <location>
        <position position="112"/>
    </location>
    <ligand>
        <name>3-methyl-2-oxobutanoate</name>
        <dbReference type="ChEBI" id="CHEBI:11851"/>
    </ligand>
</feature>
<feature type="binding site" evidence="1">
    <location>
        <position position="114"/>
    </location>
    <ligand>
        <name>Mg(2+)</name>
        <dbReference type="ChEBI" id="CHEBI:18420"/>
    </ligand>
</feature>
<proteinExistence type="inferred from homology"/>